<gene>
    <name evidence="1" type="primary">der</name>
    <name type="synonym">engA</name>
    <name type="ordered locus">SpyM51568</name>
</gene>
<comment type="function">
    <text evidence="1">GTPase that plays an essential role in the late steps of ribosome biogenesis.</text>
</comment>
<comment type="subunit">
    <text evidence="1">Associates with the 50S ribosomal subunit.</text>
</comment>
<comment type="similarity">
    <text evidence="1">Belongs to the TRAFAC class TrmE-Era-EngA-EngB-Septin-like GTPase superfamily. EngA (Der) GTPase family.</text>
</comment>
<reference key="1">
    <citation type="journal article" date="2007" name="J. Bacteriol.">
        <title>Complete genome of acute rheumatic fever-associated serotype M5 Streptococcus pyogenes strain Manfredo.</title>
        <authorList>
            <person name="Holden M.T.G."/>
            <person name="Scott A."/>
            <person name="Cherevach I."/>
            <person name="Chillingworth T."/>
            <person name="Churcher C."/>
            <person name="Cronin A."/>
            <person name="Dowd L."/>
            <person name="Feltwell T."/>
            <person name="Hamlin N."/>
            <person name="Holroyd S."/>
            <person name="Jagels K."/>
            <person name="Moule S."/>
            <person name="Mungall K."/>
            <person name="Quail M.A."/>
            <person name="Price C."/>
            <person name="Rabbinowitsch E."/>
            <person name="Sharp S."/>
            <person name="Skelton J."/>
            <person name="Whitehead S."/>
            <person name="Barrell B.G."/>
            <person name="Kehoe M."/>
            <person name="Parkhill J."/>
        </authorList>
    </citation>
    <scope>NUCLEOTIDE SEQUENCE [LARGE SCALE GENOMIC DNA]</scope>
    <source>
        <strain>Manfredo</strain>
    </source>
</reference>
<accession>A2RGB0</accession>
<proteinExistence type="inferred from homology"/>
<protein>
    <recommendedName>
        <fullName evidence="1">GTPase Der</fullName>
    </recommendedName>
    <alternativeName>
        <fullName evidence="1">GTP-binding protein EngA</fullName>
    </alternativeName>
</protein>
<evidence type="ECO:0000255" key="1">
    <source>
        <dbReference type="HAMAP-Rule" id="MF_00195"/>
    </source>
</evidence>
<dbReference type="EMBL" id="AM295007">
    <property type="protein sequence ID" value="CAM30889.1"/>
    <property type="molecule type" value="Genomic_DNA"/>
</dbReference>
<dbReference type="RefSeq" id="WP_011889131.1">
    <property type="nucleotide sequence ID" value="NC_009332.1"/>
</dbReference>
<dbReference type="SMR" id="A2RGB0"/>
<dbReference type="KEGG" id="spf:SpyM51568"/>
<dbReference type="HOGENOM" id="CLU_016077_6_2_9"/>
<dbReference type="GO" id="GO:0005525">
    <property type="term" value="F:GTP binding"/>
    <property type="evidence" value="ECO:0007669"/>
    <property type="project" value="UniProtKB-UniRule"/>
</dbReference>
<dbReference type="GO" id="GO:0043022">
    <property type="term" value="F:ribosome binding"/>
    <property type="evidence" value="ECO:0007669"/>
    <property type="project" value="TreeGrafter"/>
</dbReference>
<dbReference type="GO" id="GO:0042254">
    <property type="term" value="P:ribosome biogenesis"/>
    <property type="evidence" value="ECO:0007669"/>
    <property type="project" value="UniProtKB-KW"/>
</dbReference>
<dbReference type="CDD" id="cd01894">
    <property type="entry name" value="EngA1"/>
    <property type="match status" value="1"/>
</dbReference>
<dbReference type="CDD" id="cd01895">
    <property type="entry name" value="EngA2"/>
    <property type="match status" value="1"/>
</dbReference>
<dbReference type="FunFam" id="3.30.300.20:FF:000004">
    <property type="entry name" value="GTPase Der"/>
    <property type="match status" value="1"/>
</dbReference>
<dbReference type="FunFam" id="3.40.50.300:FF:000040">
    <property type="entry name" value="GTPase Der"/>
    <property type="match status" value="1"/>
</dbReference>
<dbReference type="FunFam" id="3.40.50.300:FF:000057">
    <property type="entry name" value="GTPase Der"/>
    <property type="match status" value="1"/>
</dbReference>
<dbReference type="Gene3D" id="3.30.300.20">
    <property type="match status" value="1"/>
</dbReference>
<dbReference type="Gene3D" id="3.40.50.300">
    <property type="entry name" value="P-loop containing nucleotide triphosphate hydrolases"/>
    <property type="match status" value="2"/>
</dbReference>
<dbReference type="HAMAP" id="MF_00195">
    <property type="entry name" value="GTPase_Der"/>
    <property type="match status" value="1"/>
</dbReference>
<dbReference type="InterPro" id="IPR031166">
    <property type="entry name" value="G_ENGA"/>
</dbReference>
<dbReference type="InterPro" id="IPR006073">
    <property type="entry name" value="GTP-bd"/>
</dbReference>
<dbReference type="InterPro" id="IPR016484">
    <property type="entry name" value="GTPase_Der"/>
</dbReference>
<dbReference type="InterPro" id="IPR032859">
    <property type="entry name" value="KH_dom-like"/>
</dbReference>
<dbReference type="InterPro" id="IPR015946">
    <property type="entry name" value="KH_dom-like_a/b"/>
</dbReference>
<dbReference type="InterPro" id="IPR027417">
    <property type="entry name" value="P-loop_NTPase"/>
</dbReference>
<dbReference type="InterPro" id="IPR005225">
    <property type="entry name" value="Small_GTP-bd"/>
</dbReference>
<dbReference type="NCBIfam" id="TIGR03594">
    <property type="entry name" value="GTPase_EngA"/>
    <property type="match status" value="1"/>
</dbReference>
<dbReference type="NCBIfam" id="TIGR00231">
    <property type="entry name" value="small_GTP"/>
    <property type="match status" value="2"/>
</dbReference>
<dbReference type="PANTHER" id="PTHR43834">
    <property type="entry name" value="GTPASE DER"/>
    <property type="match status" value="1"/>
</dbReference>
<dbReference type="PANTHER" id="PTHR43834:SF6">
    <property type="entry name" value="GTPASE DER"/>
    <property type="match status" value="1"/>
</dbReference>
<dbReference type="Pfam" id="PF14714">
    <property type="entry name" value="KH_dom-like"/>
    <property type="match status" value="1"/>
</dbReference>
<dbReference type="Pfam" id="PF01926">
    <property type="entry name" value="MMR_HSR1"/>
    <property type="match status" value="2"/>
</dbReference>
<dbReference type="PIRSF" id="PIRSF006485">
    <property type="entry name" value="GTP-binding_EngA"/>
    <property type="match status" value="1"/>
</dbReference>
<dbReference type="PRINTS" id="PR00326">
    <property type="entry name" value="GTP1OBG"/>
</dbReference>
<dbReference type="SUPFAM" id="SSF52540">
    <property type="entry name" value="P-loop containing nucleoside triphosphate hydrolases"/>
    <property type="match status" value="2"/>
</dbReference>
<dbReference type="PROSITE" id="PS51712">
    <property type="entry name" value="G_ENGA"/>
    <property type="match status" value="2"/>
</dbReference>
<sequence>MVLPTVAIVGRPNVGKSTLFNRIAGERISIVEDIEGVTRDRIYATGEWLNRQFSLIDTGGIDDVDAPFMEQIKHQAQIAMEEADVIVFVVSGKEGVTDADEYVSKILYRTNTPVILAVNKVDNPEMRNDIYDFYSLGLGDPYPVSSVHGIGTGDVLDAIVENLPVEEAEENDDIIRFSLIGRPNVGKSSLINAILGEDRVIASPVAGTTRDAIDTHFTDADGQEFTMIDTAGMRKSGKIYENTEKYSVMRAMRAIDRSGVVLMVINAEEGIREYDKRIAGFAHEAGKGMIIVVNKWDTIDKDNHTVAKWEADIRDQFQFLTYAPIIFVSALTKQRLNKLPDLIKRISESQNKRIPSAVLNDVIMDAIAINPTPTDKGKRLKIFYATQVSVKPPTFVVFVNEEELMHFSYLRFLENQIRAAFTFEGTPIHLIARKRK</sequence>
<keyword id="KW-0342">GTP-binding</keyword>
<keyword id="KW-0547">Nucleotide-binding</keyword>
<keyword id="KW-0677">Repeat</keyword>
<keyword id="KW-0690">Ribosome biogenesis</keyword>
<name>DER_STRPG</name>
<feature type="chain" id="PRO_1000011757" description="GTPase Der">
    <location>
        <begin position="1"/>
        <end position="436"/>
    </location>
</feature>
<feature type="domain" description="EngA-type G 1">
    <location>
        <begin position="4"/>
        <end position="167"/>
    </location>
</feature>
<feature type="domain" description="EngA-type G 2">
    <location>
        <begin position="175"/>
        <end position="351"/>
    </location>
</feature>
<feature type="domain" description="KH-like" evidence="1">
    <location>
        <begin position="352"/>
        <end position="436"/>
    </location>
</feature>
<feature type="binding site" evidence="1">
    <location>
        <begin position="10"/>
        <end position="17"/>
    </location>
    <ligand>
        <name>GTP</name>
        <dbReference type="ChEBI" id="CHEBI:37565"/>
        <label>1</label>
    </ligand>
</feature>
<feature type="binding site" evidence="1">
    <location>
        <begin position="57"/>
        <end position="61"/>
    </location>
    <ligand>
        <name>GTP</name>
        <dbReference type="ChEBI" id="CHEBI:37565"/>
        <label>1</label>
    </ligand>
</feature>
<feature type="binding site" evidence="1">
    <location>
        <begin position="119"/>
        <end position="122"/>
    </location>
    <ligand>
        <name>GTP</name>
        <dbReference type="ChEBI" id="CHEBI:37565"/>
        <label>1</label>
    </ligand>
</feature>
<feature type="binding site" evidence="1">
    <location>
        <begin position="181"/>
        <end position="188"/>
    </location>
    <ligand>
        <name>GTP</name>
        <dbReference type="ChEBI" id="CHEBI:37565"/>
        <label>2</label>
    </ligand>
</feature>
<feature type="binding site" evidence="1">
    <location>
        <begin position="229"/>
        <end position="233"/>
    </location>
    <ligand>
        <name>GTP</name>
        <dbReference type="ChEBI" id="CHEBI:37565"/>
        <label>2</label>
    </ligand>
</feature>
<feature type="binding site" evidence="1">
    <location>
        <begin position="294"/>
        <end position="297"/>
    </location>
    <ligand>
        <name>GTP</name>
        <dbReference type="ChEBI" id="CHEBI:37565"/>
        <label>2</label>
    </ligand>
</feature>
<organism>
    <name type="scientific">Streptococcus pyogenes serotype M5 (strain Manfredo)</name>
    <dbReference type="NCBI Taxonomy" id="160491"/>
    <lineage>
        <taxon>Bacteria</taxon>
        <taxon>Bacillati</taxon>
        <taxon>Bacillota</taxon>
        <taxon>Bacilli</taxon>
        <taxon>Lactobacillales</taxon>
        <taxon>Streptococcaceae</taxon>
        <taxon>Streptococcus</taxon>
    </lineage>
</organism>